<protein>
    <recommendedName>
        <fullName evidence="1">Anti-adapter protein IraM</fullName>
    </recommendedName>
</protein>
<reference key="1">
    <citation type="journal article" date="2009" name="PLoS Genet.">
        <title>Organised genome dynamics in the Escherichia coli species results in highly diverse adaptive paths.</title>
        <authorList>
            <person name="Touchon M."/>
            <person name="Hoede C."/>
            <person name="Tenaillon O."/>
            <person name="Barbe V."/>
            <person name="Baeriswyl S."/>
            <person name="Bidet P."/>
            <person name="Bingen E."/>
            <person name="Bonacorsi S."/>
            <person name="Bouchier C."/>
            <person name="Bouvet O."/>
            <person name="Calteau A."/>
            <person name="Chiapello H."/>
            <person name="Clermont O."/>
            <person name="Cruveiller S."/>
            <person name="Danchin A."/>
            <person name="Diard M."/>
            <person name="Dossat C."/>
            <person name="Karoui M.E."/>
            <person name="Frapy E."/>
            <person name="Garry L."/>
            <person name="Ghigo J.M."/>
            <person name="Gilles A.M."/>
            <person name="Johnson J."/>
            <person name="Le Bouguenec C."/>
            <person name="Lescat M."/>
            <person name="Mangenot S."/>
            <person name="Martinez-Jehanne V."/>
            <person name="Matic I."/>
            <person name="Nassif X."/>
            <person name="Oztas S."/>
            <person name="Petit M.A."/>
            <person name="Pichon C."/>
            <person name="Rouy Z."/>
            <person name="Ruf C.S."/>
            <person name="Schneider D."/>
            <person name="Tourret J."/>
            <person name="Vacherie B."/>
            <person name="Vallenet D."/>
            <person name="Medigue C."/>
            <person name="Rocha E.P.C."/>
            <person name="Denamur E."/>
        </authorList>
    </citation>
    <scope>NUCLEOTIDE SEQUENCE [LARGE SCALE GENOMIC DNA]</scope>
    <source>
        <strain>55989 / EAEC</strain>
    </source>
</reference>
<keyword id="KW-0963">Cytoplasm</keyword>
<keyword id="KW-1185">Reference proteome</keyword>
<keyword id="KW-0346">Stress response</keyword>
<comment type="function">
    <text evidence="1">Inhibits RpoS proteolysis by regulating RssB activity, thereby increasing the stability of the sigma stress factor RpoS during magnesium starvation.</text>
</comment>
<comment type="subcellular location">
    <subcellularLocation>
        <location evidence="1">Cytoplasm</location>
    </subcellularLocation>
</comment>
<comment type="similarity">
    <text evidence="1">Belongs to the IraM/RssC family.</text>
</comment>
<evidence type="ECO:0000255" key="1">
    <source>
        <dbReference type="HAMAP-Rule" id="MF_01199"/>
    </source>
</evidence>
<feature type="chain" id="PRO_1000164553" description="Anti-adapter protein IraM">
    <location>
        <begin position="1"/>
        <end position="107"/>
    </location>
</feature>
<gene>
    <name evidence="1" type="primary">iraM</name>
    <name type="ordered locus">EC55989_1250</name>
</gene>
<sequence>MKWIVIDTIIQPSCGISFSAIWGNMKMIIWYQSTIFLPPGSIFTPVKSGIILKDKEYPITIYNIAPFNKDLWSLLKSSQECPPGESKITNKCLHNSCIIKICPYGLK</sequence>
<organism>
    <name type="scientific">Escherichia coli (strain 55989 / EAEC)</name>
    <dbReference type="NCBI Taxonomy" id="585055"/>
    <lineage>
        <taxon>Bacteria</taxon>
        <taxon>Pseudomonadati</taxon>
        <taxon>Pseudomonadota</taxon>
        <taxon>Gammaproteobacteria</taxon>
        <taxon>Enterobacterales</taxon>
        <taxon>Enterobacteriaceae</taxon>
        <taxon>Escherichia</taxon>
    </lineage>
</organism>
<name>IRAM_ECO55</name>
<dbReference type="EMBL" id="CU928145">
    <property type="protein sequence ID" value="CAU97109.1"/>
    <property type="molecule type" value="Genomic_DNA"/>
</dbReference>
<dbReference type="RefSeq" id="WP_001307134.1">
    <property type="nucleotide sequence ID" value="NC_011748.1"/>
</dbReference>
<dbReference type="SMR" id="B7LGR5"/>
<dbReference type="KEGG" id="eck:EC55989_1250"/>
<dbReference type="HOGENOM" id="CLU_143527_1_0_6"/>
<dbReference type="Proteomes" id="UP000000746">
    <property type="component" value="Chromosome"/>
</dbReference>
<dbReference type="GO" id="GO:0005737">
    <property type="term" value="C:cytoplasm"/>
    <property type="evidence" value="ECO:0007669"/>
    <property type="project" value="UniProtKB-SubCell"/>
</dbReference>
<dbReference type="GO" id="GO:0009267">
    <property type="term" value="P:cellular response to starvation"/>
    <property type="evidence" value="ECO:0007669"/>
    <property type="project" value="UniProtKB-UniRule"/>
</dbReference>
<dbReference type="FunFam" id="2.40.50.650:FF:000001">
    <property type="entry name" value="Anti-adapter protein IraM"/>
    <property type="match status" value="1"/>
</dbReference>
<dbReference type="Gene3D" id="2.40.50.650">
    <property type="match status" value="1"/>
</dbReference>
<dbReference type="HAMAP" id="MF_01199">
    <property type="entry name" value="Anti_adapt_IraM"/>
    <property type="match status" value="1"/>
</dbReference>
<dbReference type="InterPro" id="IPR014448">
    <property type="entry name" value="Anti-adapter_IraM"/>
</dbReference>
<dbReference type="InterPro" id="IPR038679">
    <property type="entry name" value="PmrD_sf"/>
</dbReference>
<dbReference type="NCBIfam" id="NF007393">
    <property type="entry name" value="PRK09919.1"/>
    <property type="match status" value="1"/>
</dbReference>
<dbReference type="PIRSF" id="PIRSF007036">
    <property type="entry name" value="Elb1"/>
    <property type="match status" value="1"/>
</dbReference>
<accession>B7LGR5</accession>
<proteinExistence type="inferred from homology"/>